<feature type="chain" id="PRO_0000332599" description="Ribonuclease H">
    <location>
        <begin position="1"/>
        <end position="152"/>
    </location>
</feature>
<feature type="domain" description="RNase H type-1" evidence="2">
    <location>
        <begin position="6"/>
        <end position="147"/>
    </location>
</feature>
<feature type="binding site" evidence="1">
    <location>
        <position position="15"/>
    </location>
    <ligand>
        <name>Mg(2+)</name>
        <dbReference type="ChEBI" id="CHEBI:18420"/>
        <label>1</label>
    </ligand>
</feature>
<feature type="binding site" evidence="1">
    <location>
        <position position="15"/>
    </location>
    <ligand>
        <name>Mg(2+)</name>
        <dbReference type="ChEBI" id="CHEBI:18420"/>
        <label>2</label>
    </ligand>
</feature>
<feature type="binding site" evidence="1">
    <location>
        <position position="53"/>
    </location>
    <ligand>
        <name>Mg(2+)</name>
        <dbReference type="ChEBI" id="CHEBI:18420"/>
        <label>1</label>
    </ligand>
</feature>
<feature type="binding site" evidence="1">
    <location>
        <position position="75"/>
    </location>
    <ligand>
        <name>Mg(2+)</name>
        <dbReference type="ChEBI" id="CHEBI:18420"/>
        <label>1</label>
    </ligand>
</feature>
<feature type="binding site" evidence="1">
    <location>
        <position position="139"/>
    </location>
    <ligand>
        <name>Mg(2+)</name>
        <dbReference type="ChEBI" id="CHEBI:18420"/>
        <label>2</label>
    </ligand>
</feature>
<comment type="function">
    <text evidence="1">Endonuclease that specifically degrades the RNA of RNA-DNA hybrids.</text>
</comment>
<comment type="catalytic activity">
    <reaction evidence="1">
        <text>Endonucleolytic cleavage to 5'-phosphomonoester.</text>
        <dbReference type="EC" id="3.1.26.4"/>
    </reaction>
</comment>
<comment type="cofactor">
    <cofactor evidence="1">
        <name>Mg(2+)</name>
        <dbReference type="ChEBI" id="CHEBI:18420"/>
    </cofactor>
    <text evidence="1">Binds 1 Mg(2+) ion per subunit. May bind a second metal ion at a regulatory site, or after substrate binding.</text>
</comment>
<comment type="subunit">
    <text evidence="1">Monomer.</text>
</comment>
<comment type="subcellular location">
    <subcellularLocation>
        <location evidence="1">Cytoplasm</location>
    </subcellularLocation>
</comment>
<comment type="similarity">
    <text evidence="1">Belongs to the RNase H family.</text>
</comment>
<accession>Q2A3X6</accession>
<organism>
    <name type="scientific">Francisella tularensis subsp. holarctica (strain LVS)</name>
    <dbReference type="NCBI Taxonomy" id="376619"/>
    <lineage>
        <taxon>Bacteria</taxon>
        <taxon>Pseudomonadati</taxon>
        <taxon>Pseudomonadota</taxon>
        <taxon>Gammaproteobacteria</taxon>
        <taxon>Thiotrichales</taxon>
        <taxon>Francisellaceae</taxon>
        <taxon>Francisella</taxon>
    </lineage>
</organism>
<evidence type="ECO:0000255" key="1">
    <source>
        <dbReference type="HAMAP-Rule" id="MF_00042"/>
    </source>
</evidence>
<evidence type="ECO:0000255" key="2">
    <source>
        <dbReference type="PROSITE-ProRule" id="PRU00408"/>
    </source>
</evidence>
<protein>
    <recommendedName>
        <fullName evidence="1">Ribonuclease H</fullName>
        <shortName evidence="1">RNase H</shortName>
        <ecNumber evidence="1">3.1.26.4</ecNumber>
    </recommendedName>
</protein>
<name>RNH_FRATH</name>
<gene>
    <name evidence="1" type="primary">rnhA</name>
    <name type="ordered locus">FTL_0854</name>
</gene>
<sequence length="152" mass="16976">MEIFKKKNRVIAYTDGACKGNPGIGGWGAILSYNGVDKEIYGSEKDTTNNRMELMAAIKTLQALKRKCDITIYTDSKYLQNGINEWLANWKANGWKTAAKKEVKNKDLWQELDSLTNKHNVTWGWVKGHSGNAGNEKADELANKAIAELIGK</sequence>
<proteinExistence type="inferred from homology"/>
<reference key="1">
    <citation type="submission" date="2006-03" db="EMBL/GenBank/DDBJ databases">
        <title>Complete genome sequence of Francisella tularensis LVS (Live Vaccine Strain).</title>
        <authorList>
            <person name="Chain P."/>
            <person name="Larimer F."/>
            <person name="Land M."/>
            <person name="Stilwagen S."/>
            <person name="Larsson P."/>
            <person name="Bearden S."/>
            <person name="Chu M."/>
            <person name="Oyston P."/>
            <person name="Forsman M."/>
            <person name="Andersson S."/>
            <person name="Lindler L."/>
            <person name="Titball R."/>
            <person name="Garcia E."/>
        </authorList>
    </citation>
    <scope>NUCLEOTIDE SEQUENCE [LARGE SCALE GENOMIC DNA]</scope>
    <source>
        <strain>LVS</strain>
    </source>
</reference>
<keyword id="KW-0963">Cytoplasm</keyword>
<keyword id="KW-0255">Endonuclease</keyword>
<keyword id="KW-0378">Hydrolase</keyword>
<keyword id="KW-0460">Magnesium</keyword>
<keyword id="KW-0479">Metal-binding</keyword>
<keyword id="KW-0540">Nuclease</keyword>
<keyword id="KW-1185">Reference proteome</keyword>
<dbReference type="EC" id="3.1.26.4" evidence="1"/>
<dbReference type="EMBL" id="AM233362">
    <property type="protein sequence ID" value="CAJ79293.1"/>
    <property type="molecule type" value="Genomic_DNA"/>
</dbReference>
<dbReference type="RefSeq" id="WP_003015471.1">
    <property type="nucleotide sequence ID" value="NZ_CP009694.1"/>
</dbReference>
<dbReference type="SMR" id="Q2A3X6"/>
<dbReference type="GeneID" id="75265176"/>
<dbReference type="KEGG" id="ftl:FTL_0854"/>
<dbReference type="Proteomes" id="UP000001944">
    <property type="component" value="Chromosome"/>
</dbReference>
<dbReference type="GO" id="GO:0005737">
    <property type="term" value="C:cytoplasm"/>
    <property type="evidence" value="ECO:0007669"/>
    <property type="project" value="UniProtKB-SubCell"/>
</dbReference>
<dbReference type="GO" id="GO:0000287">
    <property type="term" value="F:magnesium ion binding"/>
    <property type="evidence" value="ECO:0007669"/>
    <property type="project" value="UniProtKB-UniRule"/>
</dbReference>
<dbReference type="GO" id="GO:0003676">
    <property type="term" value="F:nucleic acid binding"/>
    <property type="evidence" value="ECO:0007669"/>
    <property type="project" value="InterPro"/>
</dbReference>
<dbReference type="GO" id="GO:0004523">
    <property type="term" value="F:RNA-DNA hybrid ribonuclease activity"/>
    <property type="evidence" value="ECO:0007669"/>
    <property type="project" value="UniProtKB-UniRule"/>
</dbReference>
<dbReference type="GO" id="GO:0043137">
    <property type="term" value="P:DNA replication, removal of RNA primer"/>
    <property type="evidence" value="ECO:0007669"/>
    <property type="project" value="TreeGrafter"/>
</dbReference>
<dbReference type="CDD" id="cd09278">
    <property type="entry name" value="RNase_HI_prokaryote_like"/>
    <property type="match status" value="1"/>
</dbReference>
<dbReference type="FunFam" id="3.30.420.10:FF:000089">
    <property type="entry name" value="Ribonuclease H"/>
    <property type="match status" value="1"/>
</dbReference>
<dbReference type="Gene3D" id="3.30.420.10">
    <property type="entry name" value="Ribonuclease H-like superfamily/Ribonuclease H"/>
    <property type="match status" value="1"/>
</dbReference>
<dbReference type="HAMAP" id="MF_00042">
    <property type="entry name" value="RNase_H"/>
    <property type="match status" value="1"/>
</dbReference>
<dbReference type="InterPro" id="IPR050092">
    <property type="entry name" value="RNase_H"/>
</dbReference>
<dbReference type="InterPro" id="IPR012337">
    <property type="entry name" value="RNaseH-like_sf"/>
</dbReference>
<dbReference type="InterPro" id="IPR002156">
    <property type="entry name" value="RNaseH_domain"/>
</dbReference>
<dbReference type="InterPro" id="IPR036397">
    <property type="entry name" value="RNaseH_sf"/>
</dbReference>
<dbReference type="InterPro" id="IPR022892">
    <property type="entry name" value="RNaseHI"/>
</dbReference>
<dbReference type="NCBIfam" id="NF001236">
    <property type="entry name" value="PRK00203.1"/>
    <property type="match status" value="1"/>
</dbReference>
<dbReference type="PANTHER" id="PTHR10642">
    <property type="entry name" value="RIBONUCLEASE H1"/>
    <property type="match status" value="1"/>
</dbReference>
<dbReference type="PANTHER" id="PTHR10642:SF26">
    <property type="entry name" value="RIBONUCLEASE H1"/>
    <property type="match status" value="1"/>
</dbReference>
<dbReference type="Pfam" id="PF00075">
    <property type="entry name" value="RNase_H"/>
    <property type="match status" value="1"/>
</dbReference>
<dbReference type="SUPFAM" id="SSF53098">
    <property type="entry name" value="Ribonuclease H-like"/>
    <property type="match status" value="1"/>
</dbReference>
<dbReference type="PROSITE" id="PS50879">
    <property type="entry name" value="RNASE_H_1"/>
    <property type="match status" value="1"/>
</dbReference>